<name>RL22_POLSJ</name>
<keyword id="KW-1185">Reference proteome</keyword>
<keyword id="KW-0687">Ribonucleoprotein</keyword>
<keyword id="KW-0689">Ribosomal protein</keyword>
<keyword id="KW-0694">RNA-binding</keyword>
<keyword id="KW-0699">rRNA-binding</keyword>
<dbReference type="EMBL" id="CP000316">
    <property type="protein sequence ID" value="ABE42226.1"/>
    <property type="molecule type" value="Genomic_DNA"/>
</dbReference>
<dbReference type="RefSeq" id="WP_007866508.1">
    <property type="nucleotide sequence ID" value="NZ_FNHX01000007.1"/>
</dbReference>
<dbReference type="SMR" id="Q12GW6"/>
<dbReference type="STRING" id="296591.Bpro_0261"/>
<dbReference type="KEGG" id="pol:Bpro_0261"/>
<dbReference type="eggNOG" id="COG0091">
    <property type="taxonomic scope" value="Bacteria"/>
</dbReference>
<dbReference type="HOGENOM" id="CLU_083987_3_3_4"/>
<dbReference type="OrthoDB" id="9805969at2"/>
<dbReference type="Proteomes" id="UP000001983">
    <property type="component" value="Chromosome"/>
</dbReference>
<dbReference type="GO" id="GO:0022625">
    <property type="term" value="C:cytosolic large ribosomal subunit"/>
    <property type="evidence" value="ECO:0007669"/>
    <property type="project" value="TreeGrafter"/>
</dbReference>
<dbReference type="GO" id="GO:0019843">
    <property type="term" value="F:rRNA binding"/>
    <property type="evidence" value="ECO:0007669"/>
    <property type="project" value="UniProtKB-UniRule"/>
</dbReference>
<dbReference type="GO" id="GO:0003735">
    <property type="term" value="F:structural constituent of ribosome"/>
    <property type="evidence" value="ECO:0007669"/>
    <property type="project" value="InterPro"/>
</dbReference>
<dbReference type="GO" id="GO:0006412">
    <property type="term" value="P:translation"/>
    <property type="evidence" value="ECO:0007669"/>
    <property type="project" value="UniProtKB-UniRule"/>
</dbReference>
<dbReference type="CDD" id="cd00336">
    <property type="entry name" value="Ribosomal_L22"/>
    <property type="match status" value="1"/>
</dbReference>
<dbReference type="FunFam" id="3.90.470.10:FF:000001">
    <property type="entry name" value="50S ribosomal protein L22"/>
    <property type="match status" value="1"/>
</dbReference>
<dbReference type="Gene3D" id="3.90.470.10">
    <property type="entry name" value="Ribosomal protein L22/L17"/>
    <property type="match status" value="1"/>
</dbReference>
<dbReference type="HAMAP" id="MF_01331_B">
    <property type="entry name" value="Ribosomal_uL22_B"/>
    <property type="match status" value="1"/>
</dbReference>
<dbReference type="InterPro" id="IPR001063">
    <property type="entry name" value="Ribosomal_uL22"/>
</dbReference>
<dbReference type="InterPro" id="IPR005727">
    <property type="entry name" value="Ribosomal_uL22_bac/chlpt-type"/>
</dbReference>
<dbReference type="InterPro" id="IPR047867">
    <property type="entry name" value="Ribosomal_uL22_bac/org-type"/>
</dbReference>
<dbReference type="InterPro" id="IPR018260">
    <property type="entry name" value="Ribosomal_uL22_CS"/>
</dbReference>
<dbReference type="InterPro" id="IPR036394">
    <property type="entry name" value="Ribosomal_uL22_sf"/>
</dbReference>
<dbReference type="NCBIfam" id="TIGR01044">
    <property type="entry name" value="rplV_bact"/>
    <property type="match status" value="1"/>
</dbReference>
<dbReference type="PANTHER" id="PTHR13501">
    <property type="entry name" value="CHLOROPLAST 50S RIBOSOMAL PROTEIN L22-RELATED"/>
    <property type="match status" value="1"/>
</dbReference>
<dbReference type="PANTHER" id="PTHR13501:SF8">
    <property type="entry name" value="LARGE RIBOSOMAL SUBUNIT PROTEIN UL22M"/>
    <property type="match status" value="1"/>
</dbReference>
<dbReference type="Pfam" id="PF00237">
    <property type="entry name" value="Ribosomal_L22"/>
    <property type="match status" value="1"/>
</dbReference>
<dbReference type="SUPFAM" id="SSF54843">
    <property type="entry name" value="Ribosomal protein L22"/>
    <property type="match status" value="1"/>
</dbReference>
<dbReference type="PROSITE" id="PS00464">
    <property type="entry name" value="RIBOSOMAL_L22"/>
    <property type="match status" value="1"/>
</dbReference>
<feature type="chain" id="PRO_1000052624" description="Large ribosomal subunit protein uL22">
    <location>
        <begin position="1"/>
        <end position="109"/>
    </location>
</feature>
<accession>Q12GW6</accession>
<evidence type="ECO:0000255" key="1">
    <source>
        <dbReference type="HAMAP-Rule" id="MF_01331"/>
    </source>
</evidence>
<evidence type="ECO:0000305" key="2"/>
<gene>
    <name evidence="1" type="primary">rplV</name>
    <name type="ordered locus">Bpro_0261</name>
</gene>
<sequence length="109" mass="11846">METRATLRGVRLSVDKGRLVADLIRGKKVDQALNILNFTQKKAAGIIKKVVESAIANAEHNDGADIDELKVKTIYVEQGATLKRFSARAKGRGNSISKPTCHVYVVVGN</sequence>
<protein>
    <recommendedName>
        <fullName evidence="1">Large ribosomal subunit protein uL22</fullName>
    </recommendedName>
    <alternativeName>
        <fullName evidence="2">50S ribosomal protein L22</fullName>
    </alternativeName>
</protein>
<reference key="1">
    <citation type="journal article" date="2008" name="Appl. Environ. Microbiol.">
        <title>The genome of Polaromonas sp. strain JS666: insights into the evolution of a hydrocarbon- and xenobiotic-degrading bacterium, and features of relevance to biotechnology.</title>
        <authorList>
            <person name="Mattes T.E."/>
            <person name="Alexander A.K."/>
            <person name="Richardson P.M."/>
            <person name="Munk A.C."/>
            <person name="Han C.S."/>
            <person name="Stothard P."/>
            <person name="Coleman N.V."/>
        </authorList>
    </citation>
    <scope>NUCLEOTIDE SEQUENCE [LARGE SCALE GENOMIC DNA]</scope>
    <source>
        <strain>JS666 / ATCC BAA-500</strain>
    </source>
</reference>
<organism>
    <name type="scientific">Polaromonas sp. (strain JS666 / ATCC BAA-500)</name>
    <dbReference type="NCBI Taxonomy" id="296591"/>
    <lineage>
        <taxon>Bacteria</taxon>
        <taxon>Pseudomonadati</taxon>
        <taxon>Pseudomonadota</taxon>
        <taxon>Betaproteobacteria</taxon>
        <taxon>Burkholderiales</taxon>
        <taxon>Comamonadaceae</taxon>
        <taxon>Polaromonas</taxon>
    </lineage>
</organism>
<proteinExistence type="inferred from homology"/>
<comment type="function">
    <text evidence="1">This protein binds specifically to 23S rRNA; its binding is stimulated by other ribosomal proteins, e.g. L4, L17, and L20. It is important during the early stages of 50S assembly. It makes multiple contacts with different domains of the 23S rRNA in the assembled 50S subunit and ribosome (By similarity).</text>
</comment>
<comment type="function">
    <text evidence="1">The globular domain of the protein is located near the polypeptide exit tunnel on the outside of the subunit, while an extended beta-hairpin is found that lines the wall of the exit tunnel in the center of the 70S ribosome.</text>
</comment>
<comment type="subunit">
    <text evidence="1">Part of the 50S ribosomal subunit.</text>
</comment>
<comment type="similarity">
    <text evidence="1">Belongs to the universal ribosomal protein uL22 family.</text>
</comment>